<sequence>MSSNLYLKRMASKLYFKITNKDECHHGFQYEDGLNILDNEFNDNPKDSCVPGRLYFTEIHHMHKYLEFGIYLREVYLPIDNPSFRMIRDSSGDKYGANMIVLGIKRDLRDKKTWEYLVSKGINLYENNALNWASKYGFLEIVKLIMENKINCYFGKAKKAYQLAITYGHTDVVDFLKTYVNTNSDYNFVLRGNDMVIYFKC</sequence>
<name>YR868_MIMIV</name>
<gene>
    <name type="ordered locus">MIMI_R868</name>
</gene>
<reference key="1">
    <citation type="journal article" date="2004" name="Science">
        <title>The 1.2-megabase genome sequence of Mimivirus.</title>
        <authorList>
            <person name="Raoult D."/>
            <person name="Audic S."/>
            <person name="Robert C."/>
            <person name="Abergel C."/>
            <person name="Renesto P."/>
            <person name="Ogata H."/>
            <person name="La Scola B."/>
            <person name="Susan M."/>
            <person name="Claverie J.-M."/>
        </authorList>
    </citation>
    <scope>NUCLEOTIDE SEQUENCE [LARGE SCALE GENOMIC DNA]</scope>
    <source>
        <strain>Rowbotham-Bradford</strain>
    </source>
</reference>
<proteinExistence type="predicted"/>
<organismHost>
    <name type="scientific">Acanthamoeba polyphaga</name>
    <name type="common">Amoeba</name>
    <dbReference type="NCBI Taxonomy" id="5757"/>
</organismHost>
<organism>
    <name type="scientific">Acanthamoeba polyphaga mimivirus</name>
    <name type="common">APMV</name>
    <dbReference type="NCBI Taxonomy" id="212035"/>
    <lineage>
        <taxon>Viruses</taxon>
        <taxon>Varidnaviria</taxon>
        <taxon>Bamfordvirae</taxon>
        <taxon>Nucleocytoviricota</taxon>
        <taxon>Megaviricetes</taxon>
        <taxon>Imitervirales</taxon>
        <taxon>Mimiviridae</taxon>
        <taxon>Megamimivirinae</taxon>
        <taxon>Mimivirus</taxon>
        <taxon>Mimivirus bradfordmassiliense</taxon>
    </lineage>
</organism>
<accession>Q5UP27</accession>
<feature type="chain" id="PRO_0000067219" description="Putative ankyrin repeat protein R868">
    <location>
        <begin position="1"/>
        <end position="201"/>
    </location>
</feature>
<feature type="repeat" description="ANK 1">
    <location>
        <begin position="125"/>
        <end position="154"/>
    </location>
</feature>
<feature type="repeat" description="ANK 2">
    <location>
        <begin position="156"/>
        <end position="188"/>
    </location>
</feature>
<dbReference type="EMBL" id="AY653733">
    <property type="protein sequence ID" value="AAV51126.1"/>
    <property type="molecule type" value="Genomic_DNA"/>
</dbReference>
<dbReference type="SMR" id="Q5UP27"/>
<dbReference type="KEGG" id="vg:9925532"/>
<dbReference type="Proteomes" id="UP000001134">
    <property type="component" value="Genome"/>
</dbReference>
<dbReference type="Gene3D" id="1.25.40.20">
    <property type="entry name" value="Ankyrin repeat-containing domain"/>
    <property type="match status" value="1"/>
</dbReference>
<dbReference type="InterPro" id="IPR002110">
    <property type="entry name" value="Ankyrin_rpt"/>
</dbReference>
<dbReference type="InterPro" id="IPR036770">
    <property type="entry name" value="Ankyrin_rpt-contain_sf"/>
</dbReference>
<dbReference type="Pfam" id="PF12796">
    <property type="entry name" value="Ank_2"/>
    <property type="match status" value="1"/>
</dbReference>
<dbReference type="SUPFAM" id="SSF48403">
    <property type="entry name" value="Ankyrin repeat"/>
    <property type="match status" value="1"/>
</dbReference>
<protein>
    <recommendedName>
        <fullName>Putative ankyrin repeat protein R868</fullName>
    </recommendedName>
</protein>
<keyword id="KW-0040">ANK repeat</keyword>
<keyword id="KW-1185">Reference proteome</keyword>
<keyword id="KW-0677">Repeat</keyword>